<sequence>MHLMCTGLRNEKLINDRKILYGECNLNIKSDSFIILLFKEIMNPFFIFQIFAMIVWSLDNYIEYTISILFITSISIILELKNTIKNQKKIKNMLNYTCPINVYRYNTSYIISSSELVPGDIYEIKNNMTIPCDTIILSGSVTMSEHMLTGESVPIHKERLPFEGNAIINKNNKYDSNDEKDDYLRIYNNHASINMIKRNHLIEETLGKKDREYKSNTHDLCSMNKLCYINNTYDDVHMKNNKMDYNNNNNNKKKKKINNLNFVKGTYINSNDLLYDDKIGVNIFEDDVNNMKHKFNQRNINYYNKDTNNLEYNNKHRYIYDCLLKKVEAISQKNKIIYSNEDINKYMLYGGTYVLSLYNINKIKYNNKEENRILGLVIKTGFITTKGKIVNNILYHKKKELNLINDSYKFLIILIIYALFSVFILLYITLSNNEYTNHIIIKCLDIITDAIPPALPTTLTVGISIAISRLKKKFSISCLCPHKINIAGQINTMVFDKTGTLTENNLQFIGIITQNKKNKNMLSDFIHIKEMNTESYIHSKDDNMIHNKNSIISEYYIKDNMKNLHTSSKKKSITKERSNFLVQTIKSCLLKDHYIKEKKKEYYTNNTYCNDLHINDSTCSSYLLNSETKDAYCEYYNIDHLCDINKKNMDINSKNELMGKYSKNELMGKTIKNELMGKYSKNELMGKYSKNELMGKYSKNELMGKYSKNELMGKYSKNELMGKTIKNQVGVDTNIYHMNCDNDYNYDYPCDYNCNNCNDTYHRLEYHNINKDNSFNIPPEKNKSYNNISEHIKINYPLLFEALACCHTLSKVNNKIMGDVLEILMFNFTNCDMLINNNSFIIKEKKKNCSYDFQKIDGDKNIGANDERCHLNNNLVSYNILKRFEFQSRLQRMSVIVKSTYGNNNDDNNDDDNNNDDDNNDDNNNDDNNNDDNNDDNNNNNYYYNIFCKGSPEKIKELCLKSKIPNNYDEILNKYTKQGMRILSISYKRVKSKNINLLNVKRSFVESNLHFLGFLIFTNNMKKNAPDIIHNLQTSGCQCIMSTGDNVLTSIHVAKKCGIINSNVESIIIGDVIPVVGKNNKQKKKLVWYNHKNDTYLKGHDKTCIDNEFTSIQSQMNSDNICGDNICGDNIYGDNICGDNIYGDNINGDNINGDNIYGDNINGDNINGDNINTYDNIYGDNYNLDYCPTEYHKCTYNNSILYRNNFLYKKENKKDKNYKNISTLYEHRTNDIQFDKLCDILINKDPRNVNIVLTGKAFIFLKKKFYSFHLPYYEECKNIVHYIMKKKHKKIKNIINNHNSNLYYHYNIIDTFVKRMNKEYMCFNKLLYKIQQKLLYNLIHNLYKKKKYMNNYYDIDEVHLIGNNNNNNNKNNSKEKKLPLKNKMKHIRKNESNDNITFNTYTSNNIHLSKYKYVHHKNYYYPDSCTNLRKKKNSLFYNLKKYIYYEKKKYLQHCLLKHDNYKKVELPRIKDINYSYQMESIKTRNFIHSLSEQFAFSNLILSFYIIKNDDNNVYNKNYIYNKNYIYNKNSICNKNYICNKNYIYNKNNIYNKNNIYNKKNILTHAKSVLLSGSSKKFLKFFSNIIRRHKLKEKKNKKNIKRYKMNHVNNTSKGHIILNMCTHGFKKDYSSLKNKYRIVNNKRYMLKNDNVYDRHMYNLTDMYRGTQYGCSKKKNKNIYMNNNNNILKNKINRFLEHLLVDKCKRNICHKYTDIKNIKLSIYEYILRTCTVYARMKPKDKSDLILSLKKLPNNSYVGMCGDGANDCLALSCADIGISLCNNNESSICSSFTSNKLCLHSIVHILIEGRASLVNSFQLFKFISLYSIMQCSQVLILYSISNKLTDNQYIFIDIVTILPLSIFMCWTSASEKLSKNIPIGKLFSFPILISIYGQIIIQLFFVMISLVVLMNLSFYKYDKNKVMKEKSDDTYLYKAQKYTLIYSLLFSKFVYVYIFKYKE</sequence>
<accession>Q04956</accession>
<dbReference type="EC" id="7.2.2.-"/>
<dbReference type="EMBL" id="X65738">
    <property type="protein sequence ID" value="CAA46646.1"/>
    <property type="molecule type" value="Genomic_DNA"/>
</dbReference>
<dbReference type="VEuPathDB" id="PlasmoDB:PF3D7_0516100"/>
<dbReference type="VEuPathDB" id="PlasmoDB:Pf7G8-2_000135300"/>
<dbReference type="VEuPathDB" id="PlasmoDB:Pf7G8_050021300"/>
<dbReference type="VEuPathDB" id="PlasmoDB:PfCD01_050022400"/>
<dbReference type="VEuPathDB" id="PlasmoDB:PfDd2_050021000"/>
<dbReference type="VEuPathDB" id="PlasmoDB:PfGA01_050020500"/>
<dbReference type="VEuPathDB" id="PlasmoDB:PfGB4_050022000"/>
<dbReference type="VEuPathDB" id="PlasmoDB:PfGN01_050021000"/>
<dbReference type="VEuPathDB" id="PlasmoDB:PfHB3_050021100"/>
<dbReference type="VEuPathDB" id="PlasmoDB:PfIT_050021300"/>
<dbReference type="VEuPathDB" id="PlasmoDB:PfKE01_050020500"/>
<dbReference type="VEuPathDB" id="PlasmoDB:PfKH01_050021400"/>
<dbReference type="VEuPathDB" id="PlasmoDB:PfKH02_050021600"/>
<dbReference type="VEuPathDB" id="PlasmoDB:PfML01_050021000"/>
<dbReference type="VEuPathDB" id="PlasmoDB:PfNF135_050021600"/>
<dbReference type="VEuPathDB" id="PlasmoDB:PfNF166_050021200"/>
<dbReference type="VEuPathDB" id="PlasmoDB:PfNF54_050020300"/>
<dbReference type="VEuPathDB" id="PlasmoDB:PfSD01_050021000"/>
<dbReference type="VEuPathDB" id="PlasmoDB:PfSN01_050021200"/>
<dbReference type="VEuPathDB" id="PlasmoDB:PfTG01_050021200"/>
<dbReference type="GO" id="GO:0016020">
    <property type="term" value="C:membrane"/>
    <property type="evidence" value="ECO:0007669"/>
    <property type="project" value="UniProtKB-SubCell"/>
</dbReference>
<dbReference type="GO" id="GO:0005524">
    <property type="term" value="F:ATP binding"/>
    <property type="evidence" value="ECO:0007669"/>
    <property type="project" value="UniProtKB-KW"/>
</dbReference>
<dbReference type="GO" id="GO:0016887">
    <property type="term" value="F:ATP hydrolysis activity"/>
    <property type="evidence" value="ECO:0007669"/>
    <property type="project" value="InterPro"/>
</dbReference>
<dbReference type="GO" id="GO:0019829">
    <property type="term" value="F:ATPase-coupled monoatomic cation transmembrane transporter activity"/>
    <property type="evidence" value="ECO:0007669"/>
    <property type="project" value="TreeGrafter"/>
</dbReference>
<dbReference type="GO" id="GO:0046872">
    <property type="term" value="F:metal ion binding"/>
    <property type="evidence" value="ECO:0007669"/>
    <property type="project" value="UniProtKB-KW"/>
</dbReference>
<dbReference type="GO" id="GO:0140358">
    <property type="term" value="F:P-type transmembrane transporter activity"/>
    <property type="evidence" value="ECO:0007669"/>
    <property type="project" value="InterPro"/>
</dbReference>
<dbReference type="Gene3D" id="3.40.1110.10">
    <property type="entry name" value="Calcium-transporting ATPase, cytoplasmic domain N"/>
    <property type="match status" value="2"/>
</dbReference>
<dbReference type="Gene3D" id="2.70.150.10">
    <property type="entry name" value="Calcium-transporting ATPase, cytoplasmic transduction domain A"/>
    <property type="match status" value="2"/>
</dbReference>
<dbReference type="Gene3D" id="1.20.1110.10">
    <property type="entry name" value="Calcium-transporting ATPase, transmembrane domain"/>
    <property type="match status" value="1"/>
</dbReference>
<dbReference type="Gene3D" id="3.40.50.1000">
    <property type="entry name" value="HAD superfamily/HAD-like"/>
    <property type="match status" value="3"/>
</dbReference>
<dbReference type="InterPro" id="IPR023299">
    <property type="entry name" value="ATPase_P-typ_cyto_dom_N"/>
</dbReference>
<dbReference type="InterPro" id="IPR018303">
    <property type="entry name" value="ATPase_P-typ_P_site"/>
</dbReference>
<dbReference type="InterPro" id="IPR023298">
    <property type="entry name" value="ATPase_P-typ_TM_dom_sf"/>
</dbReference>
<dbReference type="InterPro" id="IPR008250">
    <property type="entry name" value="ATPase_P-typ_transduc_dom_A_sf"/>
</dbReference>
<dbReference type="InterPro" id="IPR036412">
    <property type="entry name" value="HAD-like_sf"/>
</dbReference>
<dbReference type="InterPro" id="IPR023214">
    <property type="entry name" value="HAD_sf"/>
</dbReference>
<dbReference type="InterPro" id="IPR006544">
    <property type="entry name" value="P-type_TPase_V"/>
</dbReference>
<dbReference type="InterPro" id="IPR001757">
    <property type="entry name" value="P_typ_ATPase"/>
</dbReference>
<dbReference type="NCBIfam" id="TIGR01494">
    <property type="entry name" value="ATPase_P-type"/>
    <property type="match status" value="1"/>
</dbReference>
<dbReference type="PANTHER" id="PTHR45630:SF8">
    <property type="entry name" value="CATION-TRANSPORTING ATPASE"/>
    <property type="match status" value="1"/>
</dbReference>
<dbReference type="PANTHER" id="PTHR45630">
    <property type="entry name" value="CATION-TRANSPORTING ATPASE-RELATED"/>
    <property type="match status" value="1"/>
</dbReference>
<dbReference type="Pfam" id="PF00122">
    <property type="entry name" value="E1-E2_ATPase"/>
    <property type="match status" value="2"/>
</dbReference>
<dbReference type="SUPFAM" id="SSF81653">
    <property type="entry name" value="Calcium ATPase, transduction domain A"/>
    <property type="match status" value="1"/>
</dbReference>
<dbReference type="SUPFAM" id="SSF81665">
    <property type="entry name" value="Calcium ATPase, transmembrane domain M"/>
    <property type="match status" value="1"/>
</dbReference>
<dbReference type="SUPFAM" id="SSF56784">
    <property type="entry name" value="HAD-like"/>
    <property type="match status" value="2"/>
</dbReference>
<dbReference type="SUPFAM" id="SSF81660">
    <property type="entry name" value="Metal cation-transporting ATPase, ATP-binding domain N"/>
    <property type="match status" value="1"/>
</dbReference>
<dbReference type="PROSITE" id="PS00154">
    <property type="entry name" value="ATPASE_E1_E2"/>
    <property type="match status" value="1"/>
</dbReference>
<protein>
    <recommendedName>
        <fullName>Probable cation-transporting ATPase 1</fullName>
        <ecNumber>7.2.2.-</ecNumber>
    </recommendedName>
</protein>
<evidence type="ECO:0000250" key="1"/>
<evidence type="ECO:0000255" key="2"/>
<evidence type="ECO:0000256" key="3">
    <source>
        <dbReference type="SAM" id="MobiDB-lite"/>
    </source>
</evidence>
<evidence type="ECO:0000305" key="4"/>
<name>ATX1_PLAFA</name>
<feature type="chain" id="PRO_0000046354" description="Probable cation-transporting ATPase 1">
    <location>
        <begin position="1"/>
        <end position="1956"/>
    </location>
</feature>
<feature type="topological domain" description="Cytoplasmic" evidence="2">
    <location>
        <begin position="1"/>
        <end position="35"/>
    </location>
</feature>
<feature type="transmembrane region" description="Helical" evidence="2">
    <location>
        <begin position="36"/>
        <end position="58"/>
    </location>
</feature>
<feature type="topological domain" description="Extracellular" evidence="2">
    <location>
        <begin position="59"/>
        <end position="61"/>
    </location>
</feature>
<feature type="transmembrane region" description="Helical" evidence="2">
    <location>
        <begin position="62"/>
        <end position="80"/>
    </location>
</feature>
<feature type="topological domain" description="Cytoplasmic" evidence="2">
    <location>
        <begin position="81"/>
        <end position="407"/>
    </location>
</feature>
<feature type="transmembrane region" description="Helical" evidence="2">
    <location>
        <begin position="408"/>
        <end position="427"/>
    </location>
</feature>
<feature type="topological domain" description="Extracellular" evidence="2">
    <location>
        <begin position="428"/>
        <end position="440"/>
    </location>
</feature>
<feature type="transmembrane region" description="Helical" evidence="2">
    <location>
        <begin position="441"/>
        <end position="462"/>
    </location>
</feature>
<feature type="topological domain" description="Cytoplasmic" evidence="2">
    <location>
        <begin position="463"/>
        <end position="1818"/>
    </location>
</feature>
<feature type="transmembrane region" description="Helical" evidence="2">
    <location>
        <begin position="1819"/>
        <end position="1837"/>
    </location>
</feature>
<feature type="topological domain" description="Extracellular" evidence="2">
    <location>
        <begin position="1838"/>
        <end position="1845"/>
    </location>
</feature>
<feature type="transmembrane region" description="Helical" evidence="2">
    <location>
        <begin position="1846"/>
        <end position="1863"/>
    </location>
</feature>
<feature type="topological domain" description="Cytoplasmic" evidence="2">
    <location>
        <begin position="1864"/>
        <end position="1881"/>
    </location>
</feature>
<feature type="transmembrane region" description="Helical" evidence="2">
    <location>
        <begin position="1882"/>
        <end position="1905"/>
    </location>
</feature>
<feature type="topological domain" description="Extracellular" evidence="2">
    <location>
        <begin position="1906"/>
        <end position="1928"/>
    </location>
</feature>
<feature type="transmembrane region" description="Helical" evidence="2">
    <location>
        <begin position="1929"/>
        <end position="1952"/>
    </location>
</feature>
<feature type="topological domain" description="Cytoplasmic" evidence="2">
    <location>
        <begin position="1953"/>
        <end position="1956"/>
    </location>
</feature>
<feature type="region of interest" description="Disordered" evidence="3">
    <location>
        <begin position="901"/>
        <end position="938"/>
    </location>
</feature>
<feature type="compositionally biased region" description="Acidic residues" evidence="3">
    <location>
        <begin position="907"/>
        <end position="935"/>
    </location>
</feature>
<feature type="active site" description="4-aspartylphosphate intermediate" evidence="1">
    <location>
        <position position="496"/>
    </location>
</feature>
<feature type="binding site" evidence="1">
    <location>
        <position position="1760"/>
    </location>
    <ligand>
        <name>Mg(2+)</name>
        <dbReference type="ChEBI" id="CHEBI:18420"/>
    </ligand>
</feature>
<feature type="binding site" evidence="1">
    <location>
        <position position="1764"/>
    </location>
    <ligand>
        <name>Mg(2+)</name>
        <dbReference type="ChEBI" id="CHEBI:18420"/>
    </ligand>
</feature>
<proteinExistence type="inferred from homology"/>
<keyword id="KW-0067">ATP-binding</keyword>
<keyword id="KW-0460">Magnesium</keyword>
<keyword id="KW-0472">Membrane</keyword>
<keyword id="KW-0479">Metal-binding</keyword>
<keyword id="KW-0547">Nucleotide-binding</keyword>
<keyword id="KW-0597">Phosphoprotein</keyword>
<keyword id="KW-1278">Translocase</keyword>
<keyword id="KW-0812">Transmembrane</keyword>
<keyword id="KW-1133">Transmembrane helix</keyword>
<comment type="catalytic activity">
    <reaction>
        <text>ATP + H2O = ADP + phosphate + H(+)</text>
        <dbReference type="Rhea" id="RHEA:13065"/>
        <dbReference type="ChEBI" id="CHEBI:15377"/>
        <dbReference type="ChEBI" id="CHEBI:15378"/>
        <dbReference type="ChEBI" id="CHEBI:30616"/>
        <dbReference type="ChEBI" id="CHEBI:43474"/>
        <dbReference type="ChEBI" id="CHEBI:456216"/>
    </reaction>
</comment>
<comment type="subcellular location">
    <subcellularLocation>
        <location>Membrane</location>
        <topology>Multi-pass membrane protein</topology>
    </subcellularLocation>
</comment>
<comment type="similarity">
    <text evidence="4">Belongs to the cation transport ATPase (P-type) (TC 3.A.3) family. Type V subfamily.</text>
</comment>
<organism>
    <name type="scientific">Plasmodium falciparum</name>
    <dbReference type="NCBI Taxonomy" id="5833"/>
    <lineage>
        <taxon>Eukaryota</taxon>
        <taxon>Sar</taxon>
        <taxon>Alveolata</taxon>
        <taxon>Apicomplexa</taxon>
        <taxon>Aconoidasida</taxon>
        <taxon>Haemosporida</taxon>
        <taxon>Plasmodiidae</taxon>
        <taxon>Plasmodium</taxon>
        <taxon>Plasmodium (Laverania)</taxon>
    </lineage>
</organism>
<reference key="1">
    <citation type="journal article" date="1993" name="J. Cell Biol.">
        <title>A family of cation ATPase-like molecules from Plasmodium falciparum.</title>
        <authorList>
            <person name="Krishna S."/>
            <person name="Cowan G."/>
            <person name="Meade J.C."/>
            <person name="Wells R.A."/>
            <person name="Stringer J.R."/>
            <person name="Robson K.J."/>
        </authorList>
    </citation>
    <scope>NUCLEOTIDE SEQUENCE [GENOMIC DNA]</scope>
    <source>
        <strain>T9/96</strain>
    </source>
</reference>